<organism>
    <name type="scientific">Corynebacterium glutamicum (strain ATCC 13032 / DSM 20300 / JCM 1318 / BCRC 11384 / CCUG 27702 / LMG 3730 / NBRC 12168 / NCIMB 10025 / NRRL B-2784 / 534)</name>
    <dbReference type="NCBI Taxonomy" id="196627"/>
    <lineage>
        <taxon>Bacteria</taxon>
        <taxon>Bacillati</taxon>
        <taxon>Actinomycetota</taxon>
        <taxon>Actinomycetes</taxon>
        <taxon>Mycobacteriales</taxon>
        <taxon>Corynebacteriaceae</taxon>
        <taxon>Corynebacterium</taxon>
    </lineage>
</organism>
<evidence type="ECO:0000255" key="1">
    <source>
        <dbReference type="PROSITE-ProRule" id="PRU00159"/>
    </source>
</evidence>
<evidence type="ECO:0000255" key="2">
    <source>
        <dbReference type="PROSITE-ProRule" id="PRU10027"/>
    </source>
</evidence>
<evidence type="ECO:0000256" key="3">
    <source>
        <dbReference type="SAM" id="MobiDB-lite"/>
    </source>
</evidence>
<evidence type="ECO:0000305" key="4"/>
<protein>
    <recommendedName>
        <fullName>Serine/threonine-protein kinases PknA</fullName>
        <ecNumber>2.7.11.1</ecNumber>
    </recommendedName>
</protein>
<name>PKN2_CORGL</name>
<accession>Q8NU97</accession>
<accession>Q8RQP0</accession>
<gene>
    <name type="primary">pknA</name>
    <name type="synonym">drp72</name>
    <name type="ordered locus">Cgl0042</name>
    <name type="ordered locus">cg0059</name>
</gene>
<proteinExistence type="inferred from homology"/>
<keyword id="KW-0067">ATP-binding</keyword>
<keyword id="KW-0418">Kinase</keyword>
<keyword id="KW-0547">Nucleotide-binding</keyword>
<keyword id="KW-1185">Reference proteome</keyword>
<keyword id="KW-0723">Serine/threonine-protein kinase</keyword>
<keyword id="KW-0808">Transferase</keyword>
<reference key="1">
    <citation type="submission" date="2002-04" db="EMBL/GenBank/DDBJ databases">
        <title>drp72 of Corynebacterium glutamicum.</title>
        <authorList>
            <person name="Hirano S."/>
            <person name="Kimura E."/>
            <person name="Kawahara Y."/>
            <person name="Sugimoto S."/>
        </authorList>
    </citation>
    <scope>NUCLEOTIDE SEQUENCE [GENOMIC DNA]</scope>
</reference>
<reference key="2">
    <citation type="journal article" date="2003" name="Appl. Microbiol. Biotechnol.">
        <title>The Corynebacterium glutamicum genome: features and impacts on biotechnological processes.</title>
        <authorList>
            <person name="Ikeda M."/>
            <person name="Nakagawa S."/>
        </authorList>
    </citation>
    <scope>NUCLEOTIDE SEQUENCE [LARGE SCALE GENOMIC DNA]</scope>
    <source>
        <strain>ATCC 13032 / DSM 20300 / JCM 1318 / BCRC 11384 / CCUG 27702 / LMG 3730 / NBRC 12168 / NCIMB 10025 / NRRL B-2784 / 534</strain>
    </source>
</reference>
<reference key="3">
    <citation type="journal article" date="2003" name="J. Biotechnol.">
        <title>The complete Corynebacterium glutamicum ATCC 13032 genome sequence and its impact on the production of L-aspartate-derived amino acids and vitamins.</title>
        <authorList>
            <person name="Kalinowski J."/>
            <person name="Bathe B."/>
            <person name="Bartels D."/>
            <person name="Bischoff N."/>
            <person name="Bott M."/>
            <person name="Burkovski A."/>
            <person name="Dusch N."/>
            <person name="Eggeling L."/>
            <person name="Eikmanns B.J."/>
            <person name="Gaigalat L."/>
            <person name="Goesmann A."/>
            <person name="Hartmann M."/>
            <person name="Huthmacher K."/>
            <person name="Kraemer R."/>
            <person name="Linke B."/>
            <person name="McHardy A.C."/>
            <person name="Meyer F."/>
            <person name="Moeckel B."/>
            <person name="Pfefferle W."/>
            <person name="Puehler A."/>
            <person name="Rey D.A."/>
            <person name="Rueckert C."/>
            <person name="Rupp O."/>
            <person name="Sahm H."/>
            <person name="Wendisch V.F."/>
            <person name="Wiegraebe I."/>
            <person name="Tauch A."/>
        </authorList>
    </citation>
    <scope>NUCLEOTIDE SEQUENCE [LARGE SCALE GENOMIC DNA]</scope>
    <source>
        <strain>ATCC 13032 / DSM 20300 / JCM 1318 / BCRC 11384 / CCUG 27702 / LMG 3730 / NBRC 12168 / NCIMB 10025 / NRRL B-2784 / 534</strain>
    </source>
</reference>
<comment type="catalytic activity">
    <reaction>
        <text>L-seryl-[protein] + ATP = O-phospho-L-seryl-[protein] + ADP + H(+)</text>
        <dbReference type="Rhea" id="RHEA:17989"/>
        <dbReference type="Rhea" id="RHEA-COMP:9863"/>
        <dbReference type="Rhea" id="RHEA-COMP:11604"/>
        <dbReference type="ChEBI" id="CHEBI:15378"/>
        <dbReference type="ChEBI" id="CHEBI:29999"/>
        <dbReference type="ChEBI" id="CHEBI:30616"/>
        <dbReference type="ChEBI" id="CHEBI:83421"/>
        <dbReference type="ChEBI" id="CHEBI:456216"/>
        <dbReference type="EC" id="2.7.11.1"/>
    </reaction>
</comment>
<comment type="catalytic activity">
    <reaction>
        <text>L-threonyl-[protein] + ATP = O-phospho-L-threonyl-[protein] + ADP + H(+)</text>
        <dbReference type="Rhea" id="RHEA:46608"/>
        <dbReference type="Rhea" id="RHEA-COMP:11060"/>
        <dbReference type="Rhea" id="RHEA-COMP:11605"/>
        <dbReference type="ChEBI" id="CHEBI:15378"/>
        <dbReference type="ChEBI" id="CHEBI:30013"/>
        <dbReference type="ChEBI" id="CHEBI:30616"/>
        <dbReference type="ChEBI" id="CHEBI:61977"/>
        <dbReference type="ChEBI" id="CHEBI:456216"/>
        <dbReference type="EC" id="2.7.11.1"/>
    </reaction>
</comment>
<comment type="similarity">
    <text evidence="1">Belongs to the protein kinase superfamily. Ser/Thr protein kinase family.</text>
</comment>
<comment type="sequence caution" evidence="4">
    <conflict type="frameshift">
        <sequence resource="EMBL-CDS" id="BAB88662"/>
    </conflict>
</comment>
<dbReference type="EC" id="2.7.11.1"/>
<dbReference type="EMBL" id="AB083046">
    <property type="protein sequence ID" value="BAB88662.1"/>
    <property type="status" value="ALT_FRAME"/>
    <property type="molecule type" value="Genomic_DNA"/>
</dbReference>
<dbReference type="EMBL" id="BA000036">
    <property type="protein sequence ID" value="BAB97435.1"/>
    <property type="molecule type" value="Genomic_DNA"/>
</dbReference>
<dbReference type="EMBL" id="BX927148">
    <property type="protein sequence ID" value="CAF18610.1"/>
    <property type="molecule type" value="Genomic_DNA"/>
</dbReference>
<dbReference type="RefSeq" id="NP_599294.1">
    <property type="nucleotide sequence ID" value="NC_003450.3"/>
</dbReference>
<dbReference type="RefSeq" id="WP_011013341.1">
    <property type="nucleotide sequence ID" value="NC_006958.1"/>
</dbReference>
<dbReference type="SMR" id="Q8NU97"/>
<dbReference type="DIP" id="DIP-48320N"/>
<dbReference type="IntAct" id="Q8NU97">
    <property type="interactions" value="1"/>
</dbReference>
<dbReference type="STRING" id="196627.cg0059"/>
<dbReference type="KEGG" id="cgb:cg0059"/>
<dbReference type="KEGG" id="cgl:Cgl0042"/>
<dbReference type="PATRIC" id="fig|196627.13.peg.43"/>
<dbReference type="eggNOG" id="COG0515">
    <property type="taxonomic scope" value="Bacteria"/>
</dbReference>
<dbReference type="HOGENOM" id="CLU_000288_63_44_11"/>
<dbReference type="OrthoDB" id="9762169at2"/>
<dbReference type="BioCyc" id="CORYNE:G18NG-9587-MONOMER"/>
<dbReference type="BRENDA" id="2.7.11.1">
    <property type="organism ID" value="960"/>
</dbReference>
<dbReference type="Proteomes" id="UP000000582">
    <property type="component" value="Chromosome"/>
</dbReference>
<dbReference type="Proteomes" id="UP000001009">
    <property type="component" value="Chromosome"/>
</dbReference>
<dbReference type="GO" id="GO:0005524">
    <property type="term" value="F:ATP binding"/>
    <property type="evidence" value="ECO:0007669"/>
    <property type="project" value="UniProtKB-KW"/>
</dbReference>
<dbReference type="GO" id="GO:0106310">
    <property type="term" value="F:protein serine kinase activity"/>
    <property type="evidence" value="ECO:0007669"/>
    <property type="project" value="RHEA"/>
</dbReference>
<dbReference type="GO" id="GO:0004674">
    <property type="term" value="F:protein serine/threonine kinase activity"/>
    <property type="evidence" value="ECO:0000315"/>
    <property type="project" value="CACAO"/>
</dbReference>
<dbReference type="GO" id="GO:0016772">
    <property type="term" value="F:transferase activity, transferring phosphorus-containing groups"/>
    <property type="evidence" value="ECO:0000314"/>
    <property type="project" value="CACAO"/>
</dbReference>
<dbReference type="CDD" id="cd14014">
    <property type="entry name" value="STKc_PknB_like"/>
    <property type="match status" value="1"/>
</dbReference>
<dbReference type="FunFam" id="1.10.510.10:FF:000021">
    <property type="entry name" value="Serine/threonine protein kinase"/>
    <property type="match status" value="1"/>
</dbReference>
<dbReference type="Gene3D" id="3.30.200.20">
    <property type="entry name" value="Phosphorylase Kinase, domain 1"/>
    <property type="match status" value="1"/>
</dbReference>
<dbReference type="Gene3D" id="1.10.510.10">
    <property type="entry name" value="Transferase(Phosphotransferase) domain 1"/>
    <property type="match status" value="1"/>
</dbReference>
<dbReference type="InterPro" id="IPR011009">
    <property type="entry name" value="Kinase-like_dom_sf"/>
</dbReference>
<dbReference type="InterPro" id="IPR000719">
    <property type="entry name" value="Prot_kinase_dom"/>
</dbReference>
<dbReference type="InterPro" id="IPR017441">
    <property type="entry name" value="Protein_kinase_ATP_BS"/>
</dbReference>
<dbReference type="InterPro" id="IPR008271">
    <property type="entry name" value="Ser/Thr_kinase_AS"/>
</dbReference>
<dbReference type="PANTHER" id="PTHR43289">
    <property type="entry name" value="MITOGEN-ACTIVATED PROTEIN KINASE KINASE KINASE 20-RELATED"/>
    <property type="match status" value="1"/>
</dbReference>
<dbReference type="PANTHER" id="PTHR43289:SF6">
    <property type="entry name" value="SERINE_THREONINE-PROTEIN KINASE NEKL-3"/>
    <property type="match status" value="1"/>
</dbReference>
<dbReference type="Pfam" id="PF00069">
    <property type="entry name" value="Pkinase"/>
    <property type="match status" value="1"/>
</dbReference>
<dbReference type="SMART" id="SM00220">
    <property type="entry name" value="S_TKc"/>
    <property type="match status" value="1"/>
</dbReference>
<dbReference type="SUPFAM" id="SSF56112">
    <property type="entry name" value="Protein kinase-like (PK-like)"/>
    <property type="match status" value="1"/>
</dbReference>
<dbReference type="PROSITE" id="PS00107">
    <property type="entry name" value="PROTEIN_KINASE_ATP"/>
    <property type="match status" value="1"/>
</dbReference>
<dbReference type="PROSITE" id="PS50011">
    <property type="entry name" value="PROTEIN_KINASE_DOM"/>
    <property type="match status" value="1"/>
</dbReference>
<dbReference type="PROSITE" id="PS00108">
    <property type="entry name" value="PROTEIN_KINASE_ST"/>
    <property type="match status" value="1"/>
</dbReference>
<feature type="chain" id="PRO_0000171199" description="Serine/threonine-protein kinases PknA">
    <location>
        <begin position="1"/>
        <end position="469"/>
    </location>
</feature>
<feature type="domain" description="Protein kinase" evidence="1">
    <location>
        <begin position="20"/>
        <end position="281"/>
    </location>
</feature>
<feature type="region of interest" description="Disordered" evidence="3">
    <location>
        <begin position="286"/>
        <end position="307"/>
    </location>
</feature>
<feature type="region of interest" description="Disordered" evidence="3">
    <location>
        <begin position="359"/>
        <end position="454"/>
    </location>
</feature>
<feature type="compositionally biased region" description="Low complexity" evidence="3">
    <location>
        <begin position="365"/>
        <end position="384"/>
    </location>
</feature>
<feature type="compositionally biased region" description="Low complexity" evidence="3">
    <location>
        <begin position="399"/>
        <end position="413"/>
    </location>
</feature>
<feature type="compositionally biased region" description="Polar residues" evidence="3">
    <location>
        <begin position="430"/>
        <end position="443"/>
    </location>
</feature>
<feature type="active site" description="Proton acceptor" evidence="1 2">
    <location>
        <position position="148"/>
    </location>
</feature>
<feature type="binding site" evidence="1">
    <location>
        <begin position="26"/>
        <end position="34"/>
    </location>
    <ligand>
        <name>ATP</name>
        <dbReference type="ChEBI" id="CHEBI:30616"/>
    </ligand>
</feature>
<feature type="binding site" evidence="1">
    <location>
        <position position="49"/>
    </location>
    <ligand>
        <name>ATP</name>
        <dbReference type="ChEBI" id="CHEBI:30616"/>
    </ligand>
</feature>
<feature type="sequence conflict" description="In Ref. 1; BAB88662." evidence="4" ref="1">
    <original>R</original>
    <variation>S</variation>
    <location>
        <position position="119"/>
    </location>
</feature>
<feature type="sequence conflict" description="In Ref. 1; BAB88662." evidence="4" ref="1">
    <original>D</original>
    <variation>N</variation>
    <location>
        <position position="143"/>
    </location>
</feature>
<sequence length="469" mass="50375">MSQEDITGKDRLQELIGADYRLQWIIGHGGMSTVWLADDVVNDREVAIKVLRPEFSDNQEFLNRFRNEAQAAENIDSEHVVATYDYREVPDPAGHTFCFIVMEFVRGESLADLLEREGRLPEDLALDVMEQAAHGLSVIHRMDMVHRDIKPGNMLITANGIVKITDFGIAKAAAAVPLTRTGMVVGTAQYVSPEQAQGKEVTAASDIYSLGVVGYEMMAGRRPFTGDSSVSVAIAHINQAPPQMPTSISAQTRELIGIALRKDPGRRFPDGNEMALAVSAVRLGKRPPQPRTSAMMAQAEAPSPSESTAMLGRVARPATITQEAAPKRGSGIGIGLFIAALLAVIIGAVIYAGTTGILFNDTPEETTTPETITETYTPTVEETTSQWVPPTPPTRSTFTEPETTSHRPTTSEESTSEEPTTEAPTSSRTVPQIPTSTPRTSASVPVETNAPADDLIDAVNGLLDVGGAQ</sequence>